<keyword id="KW-0002">3D-structure</keyword>
<keyword id="KW-1185">Reference proteome</keyword>
<keyword id="KW-0687">Ribonucleoprotein</keyword>
<keyword id="KW-0689">Ribosomal protein</keyword>
<keyword id="KW-0694">RNA-binding</keyword>
<keyword id="KW-0699">rRNA-binding</keyword>
<feature type="chain" id="PRO_1000005536" description="Large ribosomal subunit protein uL10">
    <location>
        <begin position="1"/>
        <end position="175"/>
    </location>
</feature>
<feature type="helix" evidence="3">
    <location>
        <begin position="3"/>
        <end position="18"/>
    </location>
</feature>
<feature type="strand" evidence="3">
    <location>
        <begin position="21"/>
        <end position="27"/>
    </location>
</feature>
<feature type="helix" evidence="3">
    <location>
        <begin position="33"/>
        <end position="42"/>
    </location>
</feature>
<feature type="turn" evidence="3">
    <location>
        <begin position="44"/>
        <end position="46"/>
    </location>
</feature>
<feature type="strand" evidence="3">
    <location>
        <begin position="47"/>
        <end position="51"/>
    </location>
</feature>
<feature type="helix" evidence="3">
    <location>
        <begin position="54"/>
        <end position="60"/>
    </location>
</feature>
<feature type="strand" evidence="3">
    <location>
        <begin position="61"/>
        <end position="65"/>
    </location>
</feature>
<feature type="helix" evidence="3">
    <location>
        <begin position="66"/>
        <end position="69"/>
    </location>
</feature>
<feature type="turn" evidence="3">
    <location>
        <begin position="70"/>
        <end position="73"/>
    </location>
</feature>
<feature type="strand" evidence="3">
    <location>
        <begin position="78"/>
        <end position="84"/>
    </location>
</feature>
<feature type="helix" evidence="3">
    <location>
        <begin position="88"/>
        <end position="100"/>
    </location>
</feature>
<feature type="strand" evidence="3">
    <location>
        <begin position="104"/>
        <end position="110"/>
    </location>
</feature>
<feature type="strand" evidence="3">
    <location>
        <begin position="113"/>
        <end position="115"/>
    </location>
</feature>
<feature type="helix" evidence="3">
    <location>
        <begin position="117"/>
        <end position="123"/>
    </location>
</feature>
<comment type="function">
    <text evidence="1">Forms part of the ribosomal stalk, playing a central role in the interaction of the ribosome with GTP-bound translation factors.</text>
</comment>
<comment type="subunit">
    <text evidence="1">Part of the ribosomal stalk of the 50S ribosomal subunit. The N-terminus interacts with L11 and the large rRNA to form the base of the stalk. The C-terminus forms an elongated spine to which L12 dimers bind in a sequential fashion forming a multimeric L10(L12)X complex.</text>
</comment>
<comment type="similarity">
    <text evidence="1">Belongs to the universal ribosomal protein uL10 family.</text>
</comment>
<protein>
    <recommendedName>
        <fullName evidence="1">Large ribosomal subunit protein uL10</fullName>
    </recommendedName>
    <alternativeName>
        <fullName evidence="2">50S ribosomal protein L10</fullName>
    </alternativeName>
</protein>
<evidence type="ECO:0000255" key="1">
    <source>
        <dbReference type="HAMAP-Rule" id="MF_00362"/>
    </source>
</evidence>
<evidence type="ECO:0000305" key="2"/>
<evidence type="ECO:0007829" key="3">
    <source>
        <dbReference type="PDB" id="5O60"/>
    </source>
</evidence>
<dbReference type="EMBL" id="CP000480">
    <property type="protein sequence ID" value="ABK75311.1"/>
    <property type="molecule type" value="Genomic_DNA"/>
</dbReference>
<dbReference type="EMBL" id="CP001663">
    <property type="protein sequence ID" value="AFP37798.1"/>
    <property type="molecule type" value="Genomic_DNA"/>
</dbReference>
<dbReference type="RefSeq" id="WP_003892752.1">
    <property type="nucleotide sequence ID" value="NZ_SIJM01000030.1"/>
</dbReference>
<dbReference type="RefSeq" id="YP_885750.1">
    <property type="nucleotide sequence ID" value="NC_008596.1"/>
</dbReference>
<dbReference type="PDB" id="5O60">
    <property type="method" value="EM"/>
    <property type="resolution" value="3.20 A"/>
    <property type="chains" value="I=1-175"/>
</dbReference>
<dbReference type="PDB" id="5O61">
    <property type="method" value="EM"/>
    <property type="resolution" value="3.31 A"/>
    <property type="chains" value="I=1-175"/>
</dbReference>
<dbReference type="PDB" id="5ZEB">
    <property type="method" value="EM"/>
    <property type="resolution" value="3.40 A"/>
    <property type="chains" value="I=1-175"/>
</dbReference>
<dbReference type="PDB" id="5ZEP">
    <property type="method" value="EM"/>
    <property type="resolution" value="3.40 A"/>
    <property type="chains" value="I=1-175"/>
</dbReference>
<dbReference type="PDB" id="5ZET">
    <property type="method" value="EM"/>
    <property type="resolution" value="3.20 A"/>
    <property type="chains" value="I=1-175"/>
</dbReference>
<dbReference type="PDB" id="6DZI">
    <property type="method" value="EM"/>
    <property type="resolution" value="3.46 A"/>
    <property type="chains" value="I=1-126"/>
</dbReference>
<dbReference type="PDB" id="6DZP">
    <property type="method" value="EM"/>
    <property type="resolution" value="3.42 A"/>
    <property type="chains" value="I=1-175"/>
</dbReference>
<dbReference type="PDB" id="7S0S">
    <property type="method" value="EM"/>
    <property type="resolution" value="3.05 A"/>
    <property type="chains" value="J=1-126"/>
</dbReference>
<dbReference type="PDB" id="7XAM">
    <property type="method" value="EM"/>
    <property type="resolution" value="2.80 A"/>
    <property type="chains" value="I=1-175"/>
</dbReference>
<dbReference type="PDB" id="7Y41">
    <property type="method" value="EM"/>
    <property type="resolution" value="4.10 A"/>
    <property type="chains" value="I=1-175"/>
</dbReference>
<dbReference type="PDB" id="8FR8">
    <property type="method" value="EM"/>
    <property type="resolution" value="2.76 A"/>
    <property type="chains" value="R=1-126"/>
</dbReference>
<dbReference type="PDB" id="8KAB">
    <property type="method" value="EM"/>
    <property type="resolution" value="3.30 A"/>
    <property type="chains" value="I=1-175"/>
</dbReference>
<dbReference type="PDB" id="8V9J">
    <property type="method" value="EM"/>
    <property type="resolution" value="3.10 A"/>
    <property type="chains" value="I=1-175"/>
</dbReference>
<dbReference type="PDB" id="8V9K">
    <property type="method" value="EM"/>
    <property type="resolution" value="3.10 A"/>
    <property type="chains" value="I=1-175"/>
</dbReference>
<dbReference type="PDB" id="8V9L">
    <property type="method" value="EM"/>
    <property type="resolution" value="3.00 A"/>
    <property type="chains" value="I=1-175"/>
</dbReference>
<dbReference type="PDB" id="8VIO">
    <property type="method" value="EM"/>
    <property type="resolution" value="3.26 A"/>
    <property type="chains" value="I=1-175"/>
</dbReference>
<dbReference type="PDB" id="8VK0">
    <property type="method" value="EM"/>
    <property type="resolution" value="3.14 A"/>
    <property type="chains" value="I=1-175"/>
</dbReference>
<dbReference type="PDB" id="8VK7">
    <property type="method" value="EM"/>
    <property type="resolution" value="3.09 A"/>
    <property type="chains" value="I=1-175"/>
</dbReference>
<dbReference type="PDB" id="8VKI">
    <property type="method" value="EM"/>
    <property type="resolution" value="2.96 A"/>
    <property type="chains" value="I=1-175"/>
</dbReference>
<dbReference type="PDB" id="8VR8">
    <property type="method" value="EM"/>
    <property type="resolution" value="3.25 A"/>
    <property type="chains" value="I=1-175"/>
</dbReference>
<dbReference type="PDB" id="8XZ3">
    <property type="method" value="EM"/>
    <property type="resolution" value="3.60 A"/>
    <property type="chains" value="I=1-126"/>
</dbReference>
<dbReference type="PDBsum" id="5O60"/>
<dbReference type="PDBsum" id="5O61"/>
<dbReference type="PDBsum" id="5ZEB"/>
<dbReference type="PDBsum" id="5ZEP"/>
<dbReference type="PDBsum" id="5ZET"/>
<dbReference type="PDBsum" id="6DZI"/>
<dbReference type="PDBsum" id="6DZP"/>
<dbReference type="PDBsum" id="7S0S"/>
<dbReference type="PDBsum" id="7XAM"/>
<dbReference type="PDBsum" id="7Y41"/>
<dbReference type="PDBsum" id="8FR8"/>
<dbReference type="PDBsum" id="8KAB"/>
<dbReference type="PDBsum" id="8V9J"/>
<dbReference type="PDBsum" id="8V9K"/>
<dbReference type="PDBsum" id="8V9L"/>
<dbReference type="PDBsum" id="8VIO"/>
<dbReference type="PDBsum" id="8VK0"/>
<dbReference type="PDBsum" id="8VK7"/>
<dbReference type="PDBsum" id="8VKI"/>
<dbReference type="PDBsum" id="8VR8"/>
<dbReference type="PDBsum" id="8XZ3"/>
<dbReference type="EMDB" id="EMD-29397"/>
<dbReference type="EMDB" id="EMD-33096"/>
<dbReference type="EMDB" id="EMD-33599"/>
<dbReference type="EMDB" id="EMD-37007"/>
<dbReference type="EMDB" id="EMD-3750"/>
<dbReference type="EMDB" id="EMD-3751"/>
<dbReference type="EMDB" id="EMD-38788"/>
<dbReference type="EMDB" id="EMD-43074"/>
<dbReference type="EMDB" id="EMD-43075"/>
<dbReference type="EMDB" id="EMD-43076"/>
<dbReference type="EMDB" id="EMD-43267"/>
<dbReference type="EMDB" id="EMD-43294"/>
<dbReference type="EMDB" id="EMD-43305"/>
<dbReference type="EMDB" id="EMD-43317"/>
<dbReference type="EMDB" id="EMD-43477"/>
<dbReference type="EMDB" id="EMD-6920"/>
<dbReference type="EMDB" id="EMD-6921"/>
<dbReference type="EMDB" id="EMD-6922"/>
<dbReference type="EMDB" id="EMD-8932"/>
<dbReference type="EMDB" id="EMD-8937"/>
<dbReference type="SMR" id="A0QS62"/>
<dbReference type="IntAct" id="A0QS62">
    <property type="interactions" value="2"/>
</dbReference>
<dbReference type="STRING" id="246196.MSMEG_1364"/>
<dbReference type="PaxDb" id="246196-MSMEI_1325"/>
<dbReference type="GeneID" id="93456207"/>
<dbReference type="KEGG" id="msb:LJ00_06800"/>
<dbReference type="KEGG" id="msg:MSMEI_1325"/>
<dbReference type="KEGG" id="msm:MSMEG_1364"/>
<dbReference type="PATRIC" id="fig|246196.19.peg.1348"/>
<dbReference type="eggNOG" id="COG0244">
    <property type="taxonomic scope" value="Bacteria"/>
</dbReference>
<dbReference type="OrthoDB" id="3186107at2"/>
<dbReference type="Proteomes" id="UP000000757">
    <property type="component" value="Chromosome"/>
</dbReference>
<dbReference type="Proteomes" id="UP000006158">
    <property type="component" value="Chromosome"/>
</dbReference>
<dbReference type="GO" id="GO:0015934">
    <property type="term" value="C:large ribosomal subunit"/>
    <property type="evidence" value="ECO:0007669"/>
    <property type="project" value="InterPro"/>
</dbReference>
<dbReference type="GO" id="GO:0070180">
    <property type="term" value="F:large ribosomal subunit rRNA binding"/>
    <property type="evidence" value="ECO:0007669"/>
    <property type="project" value="UniProtKB-UniRule"/>
</dbReference>
<dbReference type="GO" id="GO:0003735">
    <property type="term" value="F:structural constituent of ribosome"/>
    <property type="evidence" value="ECO:0007669"/>
    <property type="project" value="InterPro"/>
</dbReference>
<dbReference type="GO" id="GO:0006412">
    <property type="term" value="P:translation"/>
    <property type="evidence" value="ECO:0007669"/>
    <property type="project" value="UniProtKB-UniRule"/>
</dbReference>
<dbReference type="CDD" id="cd05797">
    <property type="entry name" value="Ribosomal_L10"/>
    <property type="match status" value="1"/>
</dbReference>
<dbReference type="FunFam" id="3.30.70.1730:FF:000003">
    <property type="entry name" value="50S ribosomal protein L10"/>
    <property type="match status" value="1"/>
</dbReference>
<dbReference type="Gene3D" id="3.30.70.1730">
    <property type="match status" value="1"/>
</dbReference>
<dbReference type="Gene3D" id="6.10.250.290">
    <property type="match status" value="1"/>
</dbReference>
<dbReference type="HAMAP" id="MF_00362">
    <property type="entry name" value="Ribosomal_uL10"/>
    <property type="match status" value="1"/>
</dbReference>
<dbReference type="InterPro" id="IPR001790">
    <property type="entry name" value="Ribosomal_uL10"/>
</dbReference>
<dbReference type="InterPro" id="IPR043141">
    <property type="entry name" value="Ribosomal_uL10-like_sf"/>
</dbReference>
<dbReference type="InterPro" id="IPR022973">
    <property type="entry name" value="Ribosomal_uL10_bac"/>
</dbReference>
<dbReference type="InterPro" id="IPR047865">
    <property type="entry name" value="Ribosomal_uL10_bac_type"/>
</dbReference>
<dbReference type="InterPro" id="IPR002363">
    <property type="entry name" value="Ribosomal_uL10_CS_bac"/>
</dbReference>
<dbReference type="NCBIfam" id="NF000955">
    <property type="entry name" value="PRK00099.1-1"/>
    <property type="match status" value="1"/>
</dbReference>
<dbReference type="PANTHER" id="PTHR11560">
    <property type="entry name" value="39S RIBOSOMAL PROTEIN L10, MITOCHONDRIAL"/>
    <property type="match status" value="1"/>
</dbReference>
<dbReference type="Pfam" id="PF00466">
    <property type="entry name" value="Ribosomal_L10"/>
    <property type="match status" value="1"/>
</dbReference>
<dbReference type="SUPFAM" id="SSF160369">
    <property type="entry name" value="Ribosomal protein L10-like"/>
    <property type="match status" value="1"/>
</dbReference>
<dbReference type="PROSITE" id="PS01109">
    <property type="entry name" value="RIBOSOMAL_L10"/>
    <property type="match status" value="1"/>
</dbReference>
<name>RL10_MYCS2</name>
<sequence>MAKADKATAVADIAEQFKASTATVVTEYRGLTVANLAELRRALGDSATYTVAKNTLVKRAASEAGIEGLDELFAGPTAIAFVKGEAVDAAKAIKKFAKDNKALVIKGGYMDGKALSVADVEKIADLESREVLLAKLAGAMKGNLSKAAGLFNAPASQVARLAAALQEKKAGEEAA</sequence>
<gene>
    <name evidence="1" type="primary">rplJ</name>
    <name type="ordered locus">MSMEG_1364</name>
    <name type="ordered locus">MSMEI_1325</name>
</gene>
<accession>A0QS62</accession>
<accession>I7FG00</accession>
<reference key="1">
    <citation type="submission" date="2006-10" db="EMBL/GenBank/DDBJ databases">
        <authorList>
            <person name="Fleischmann R.D."/>
            <person name="Dodson R.J."/>
            <person name="Haft D.H."/>
            <person name="Merkel J.S."/>
            <person name="Nelson W.C."/>
            <person name="Fraser C.M."/>
        </authorList>
    </citation>
    <scope>NUCLEOTIDE SEQUENCE [LARGE SCALE GENOMIC DNA]</scope>
    <source>
        <strain>ATCC 700084 / mc(2)155</strain>
    </source>
</reference>
<reference key="2">
    <citation type="journal article" date="2007" name="Genome Biol.">
        <title>Interrupted coding sequences in Mycobacterium smegmatis: authentic mutations or sequencing errors?</title>
        <authorList>
            <person name="Deshayes C."/>
            <person name="Perrodou E."/>
            <person name="Gallien S."/>
            <person name="Euphrasie D."/>
            <person name="Schaeffer C."/>
            <person name="Van-Dorsselaer A."/>
            <person name="Poch O."/>
            <person name="Lecompte O."/>
            <person name="Reyrat J.-M."/>
        </authorList>
    </citation>
    <scope>NUCLEOTIDE SEQUENCE [LARGE SCALE GENOMIC DNA]</scope>
    <source>
        <strain>ATCC 700084 / mc(2)155</strain>
    </source>
</reference>
<reference key="3">
    <citation type="journal article" date="2009" name="Genome Res.">
        <title>Ortho-proteogenomics: multiple proteomes investigation through orthology and a new MS-based protocol.</title>
        <authorList>
            <person name="Gallien S."/>
            <person name="Perrodou E."/>
            <person name="Carapito C."/>
            <person name="Deshayes C."/>
            <person name="Reyrat J.-M."/>
            <person name="Van Dorsselaer A."/>
            <person name="Poch O."/>
            <person name="Schaeffer C."/>
            <person name="Lecompte O."/>
        </authorList>
    </citation>
    <scope>NUCLEOTIDE SEQUENCE [LARGE SCALE GENOMIC DNA]</scope>
    <scope>IDENTIFICATION BY MASS SPECTROMETRY [LARGE SCALE ANALYSIS]</scope>
    <source>
        <strain>ATCC 700084 / mc(2)155</strain>
    </source>
</reference>
<organism>
    <name type="scientific">Mycolicibacterium smegmatis (strain ATCC 700084 / mc(2)155)</name>
    <name type="common">Mycobacterium smegmatis</name>
    <dbReference type="NCBI Taxonomy" id="246196"/>
    <lineage>
        <taxon>Bacteria</taxon>
        <taxon>Bacillati</taxon>
        <taxon>Actinomycetota</taxon>
        <taxon>Actinomycetes</taxon>
        <taxon>Mycobacteriales</taxon>
        <taxon>Mycobacteriaceae</taxon>
        <taxon>Mycolicibacterium</taxon>
    </lineage>
</organism>
<proteinExistence type="evidence at protein level"/>